<protein>
    <recommendedName>
        <fullName evidence="2">U-limacoditoxin(12)-Dv72</fullName>
        <shortName evidence="2">U-LCTX(12)-Dv72</shortName>
    </recommendedName>
    <alternativeName>
        <fullName evidence="2">Vulnericin</fullName>
    </alternativeName>
</protein>
<organism>
    <name type="scientific">Doratifera vulnerans</name>
    <name type="common">Mottled cup moth</name>
    <dbReference type="NCBI Taxonomy" id="1372962"/>
    <lineage>
        <taxon>Eukaryota</taxon>
        <taxon>Metazoa</taxon>
        <taxon>Ecdysozoa</taxon>
        <taxon>Arthropoda</taxon>
        <taxon>Hexapoda</taxon>
        <taxon>Insecta</taxon>
        <taxon>Pterygota</taxon>
        <taxon>Neoptera</taxon>
        <taxon>Endopterygota</taxon>
        <taxon>Lepidoptera</taxon>
        <taxon>Glossata</taxon>
        <taxon>Ditrysia</taxon>
        <taxon>Zygaenoidea</taxon>
        <taxon>Limacodidae</taxon>
        <taxon>Doratifera</taxon>
    </lineage>
</organism>
<evidence type="ECO:0000269" key="1">
    <source>
    </source>
</evidence>
<evidence type="ECO:0000303" key="2">
    <source>
    </source>
</evidence>
<evidence type="ECO:0000305" key="3"/>
<evidence type="ECO:0000305" key="4">
    <source>
    </source>
</evidence>
<proteinExistence type="evidence at protein level"/>
<name>UC72_DORVU</name>
<sequence length="29" mass="3293">MNFGMLKLLTVLIICYSNNFMRTRGGNGK</sequence>
<feature type="signal peptide" evidence="1">
    <location>
        <begin position="1"/>
        <end position="15"/>
    </location>
</feature>
<feature type="peptide" id="PRO_0000453414" description="U-limacoditoxin(12)-Dv72" evidence="1">
    <location>
        <begin position="16"/>
        <end position="27"/>
    </location>
</feature>
<feature type="modified residue" description="Asparagine amide" evidence="1">
    <location>
        <position position="27"/>
    </location>
</feature>
<accession>P0DUT3</accession>
<dbReference type="GO" id="GO:0005576">
    <property type="term" value="C:extracellular region"/>
    <property type="evidence" value="ECO:0007669"/>
    <property type="project" value="UniProtKB-SubCell"/>
</dbReference>
<dbReference type="GO" id="GO:0090729">
    <property type="term" value="F:toxin activity"/>
    <property type="evidence" value="ECO:0007669"/>
    <property type="project" value="UniProtKB-KW"/>
</dbReference>
<keyword id="KW-0027">Amidation</keyword>
<keyword id="KW-0903">Direct protein sequencing</keyword>
<keyword id="KW-0964">Secreted</keyword>
<keyword id="KW-0732">Signal</keyword>
<keyword id="KW-0800">Toxin</keyword>
<comment type="function">
    <text evidence="1">Probable toxin. Does not show insecticidal, antimicrobial and antiparasitic activities. Does not induce increase in intracellular calcium in mouse DRG neurons, suggesting that it does not induce pain.</text>
</comment>
<comment type="subcellular location">
    <subcellularLocation>
        <location evidence="1">Secreted</location>
    </subcellularLocation>
</comment>
<comment type="tissue specificity">
    <text evidence="4">Expressed by the venom secretory cell of the spine. The spine is a cuticular structure containing a single large nucleated venom-secreting cell at its base. It is an independent unit capable of producing, storing and injecting venom. On the back of D.vulnerans caterpillars, spines are grouped together by 50 to 100 to form scoli, of which there are eight in D.vulnerans.</text>
</comment>
<comment type="developmental stage">
    <text evidence="1">Only secreted by larvae. Adult moth do not have spines.</text>
</comment>
<comment type="similarity">
    <text evidence="3">Belongs to the limacoditoxin-12 family.</text>
</comment>
<reference key="1">
    <citation type="journal article" date="2021" name="Proc. Natl. Acad. Sci. U.S.A.">
        <title>Production, composition, and mode of action of the painful defensive venom produced by a limacodid caterpillar, Doratifera vulnerans.</title>
        <authorList>
            <person name="Walker A.A."/>
            <person name="Robinson S.D."/>
            <person name="Paluzzi J.V."/>
            <person name="Merritt D.J."/>
            <person name="Nixon S.A."/>
            <person name="Schroeder C.I."/>
            <person name="Jin J."/>
            <person name="Goudarzi M.H."/>
            <person name="Kotze A.C."/>
            <person name="Dekan Z."/>
            <person name="Sombke A."/>
            <person name="Alewood P.F."/>
            <person name="Fry B.G."/>
            <person name="Epstein M.E."/>
            <person name="Vetter I."/>
            <person name="King G.F."/>
        </authorList>
    </citation>
    <scope>NUCLEOTIDE SEQUENCE [MRNA]</scope>
    <scope>PROTEIN SEQUENCE OF 16-27</scope>
    <scope>FUNCTION</scope>
    <scope>SUBCELLULAR LOCATION</scope>
    <scope>AMIDATION AT ASN-27</scope>
    <scope>IDENTIFICATION BY MASS SPECTROMETRY</scope>
    <source>
        <tissue>Venom</tissue>
    </source>
</reference>